<name>YCHJ_SHIDS</name>
<evidence type="ECO:0000255" key="1">
    <source>
        <dbReference type="HAMAP-Rule" id="MF_00612"/>
    </source>
</evidence>
<protein>
    <recommendedName>
        <fullName evidence="1">UPF0225 protein YchJ</fullName>
    </recommendedName>
</protein>
<keyword id="KW-1185">Reference proteome</keyword>
<organism>
    <name type="scientific">Shigella dysenteriae serotype 1 (strain Sd197)</name>
    <dbReference type="NCBI Taxonomy" id="300267"/>
    <lineage>
        <taxon>Bacteria</taxon>
        <taxon>Pseudomonadati</taxon>
        <taxon>Pseudomonadota</taxon>
        <taxon>Gammaproteobacteria</taxon>
        <taxon>Enterobacterales</taxon>
        <taxon>Enterobacteriaceae</taxon>
        <taxon>Shigella</taxon>
    </lineage>
</organism>
<sequence length="152" mass="16950">MSQLCPCGSAVEYSLCCHPYVSGEKVAPDPEHLMRSRYCAFVMQDADYLIKTWHPSCGAAALRAELIAGFAHTEWLGLTVFEHCWQDADNIGFVSFVARFIEGGKTGAIIERSRFLKENGQWYYIDGTRPQFGRNDPCPCGSGKKIKKCCGQ</sequence>
<comment type="similarity">
    <text evidence="1">Belongs to the UPF0225 family.</text>
</comment>
<accession>Q32GX3</accession>
<proteinExistence type="inferred from homology"/>
<dbReference type="EMBL" id="CP000034">
    <property type="protein sequence ID" value="ABB61432.1"/>
    <property type="molecule type" value="Genomic_DNA"/>
</dbReference>
<dbReference type="RefSeq" id="WP_011378677.1">
    <property type="nucleotide sequence ID" value="NC_007606.1"/>
</dbReference>
<dbReference type="RefSeq" id="YP_402923.1">
    <property type="nucleotide sequence ID" value="NC_007606.1"/>
</dbReference>
<dbReference type="SMR" id="Q32GX3"/>
<dbReference type="STRING" id="300267.SDY_1285"/>
<dbReference type="EnsemblBacteria" id="ABB61432">
    <property type="protein sequence ID" value="ABB61432"/>
    <property type="gene ID" value="SDY_1285"/>
</dbReference>
<dbReference type="KEGG" id="sdy:SDY_1285"/>
<dbReference type="PATRIC" id="fig|300267.13.peg.1523"/>
<dbReference type="HOGENOM" id="CLU_099590_0_0_6"/>
<dbReference type="Proteomes" id="UP000002716">
    <property type="component" value="Chromosome"/>
</dbReference>
<dbReference type="Gene3D" id="3.10.450.50">
    <property type="match status" value="1"/>
</dbReference>
<dbReference type="HAMAP" id="MF_00612">
    <property type="entry name" value="UPF0225"/>
    <property type="match status" value="1"/>
</dbReference>
<dbReference type="InterPro" id="IPR032710">
    <property type="entry name" value="NTF2-like_dom_sf"/>
</dbReference>
<dbReference type="InterPro" id="IPR004027">
    <property type="entry name" value="SEC_C_motif"/>
</dbReference>
<dbReference type="InterPro" id="IPR023006">
    <property type="entry name" value="UPF0225"/>
</dbReference>
<dbReference type="InterPro" id="IPR048469">
    <property type="entry name" value="YchJ-like_M"/>
</dbReference>
<dbReference type="NCBIfam" id="NF002449">
    <property type="entry name" value="PRK01617.1"/>
    <property type="match status" value="1"/>
</dbReference>
<dbReference type="PANTHER" id="PTHR33747:SF1">
    <property type="entry name" value="ADENYLATE CYCLASE-ASSOCIATED CAP C-TERMINAL DOMAIN-CONTAINING PROTEIN"/>
    <property type="match status" value="1"/>
</dbReference>
<dbReference type="PANTHER" id="PTHR33747">
    <property type="entry name" value="UPF0225 PROTEIN SCO1677"/>
    <property type="match status" value="1"/>
</dbReference>
<dbReference type="Pfam" id="PF02810">
    <property type="entry name" value="SEC-C"/>
    <property type="match status" value="2"/>
</dbReference>
<dbReference type="Pfam" id="PF17775">
    <property type="entry name" value="YchJ_M-like"/>
    <property type="match status" value="1"/>
</dbReference>
<dbReference type="SUPFAM" id="SSF54427">
    <property type="entry name" value="NTF2-like"/>
    <property type="match status" value="1"/>
</dbReference>
<dbReference type="SUPFAM" id="SSF103642">
    <property type="entry name" value="Sec-C motif"/>
    <property type="match status" value="1"/>
</dbReference>
<reference key="1">
    <citation type="journal article" date="2005" name="Nucleic Acids Res.">
        <title>Genome dynamics and diversity of Shigella species, the etiologic agents of bacillary dysentery.</title>
        <authorList>
            <person name="Yang F."/>
            <person name="Yang J."/>
            <person name="Zhang X."/>
            <person name="Chen L."/>
            <person name="Jiang Y."/>
            <person name="Yan Y."/>
            <person name="Tang X."/>
            <person name="Wang J."/>
            <person name="Xiong Z."/>
            <person name="Dong J."/>
            <person name="Xue Y."/>
            <person name="Zhu Y."/>
            <person name="Xu X."/>
            <person name="Sun L."/>
            <person name="Chen S."/>
            <person name="Nie H."/>
            <person name="Peng J."/>
            <person name="Xu J."/>
            <person name="Wang Y."/>
            <person name="Yuan Z."/>
            <person name="Wen Y."/>
            <person name="Yao Z."/>
            <person name="Shen Y."/>
            <person name="Qiang B."/>
            <person name="Hou Y."/>
            <person name="Yu J."/>
            <person name="Jin Q."/>
        </authorList>
    </citation>
    <scope>NUCLEOTIDE SEQUENCE [LARGE SCALE GENOMIC DNA]</scope>
    <source>
        <strain>Sd197</strain>
    </source>
</reference>
<gene>
    <name evidence="1" type="primary">ychJ</name>
    <name type="ordered locus">SDY_1285</name>
</gene>
<feature type="chain" id="PRO_1000056742" description="UPF0225 protein YchJ">
    <location>
        <begin position="1"/>
        <end position="152"/>
    </location>
</feature>